<accession>Q27522</accession>
<comment type="function">
    <text evidence="3">Catalyzes the formation of S-adenosylmethionine from methionine and ATP. The reaction comprises two steps that are both catalyzed by the same enzyme: formation of S-adenosylmethionine (AdoMet) and triphosphate, and subsequent hydrolysis of the triphosphate.</text>
</comment>
<comment type="catalytic activity">
    <reaction evidence="3">
        <text>L-methionine + ATP + H2O = S-adenosyl-L-methionine + phosphate + diphosphate</text>
        <dbReference type="Rhea" id="RHEA:21080"/>
        <dbReference type="ChEBI" id="CHEBI:15377"/>
        <dbReference type="ChEBI" id="CHEBI:30616"/>
        <dbReference type="ChEBI" id="CHEBI:33019"/>
        <dbReference type="ChEBI" id="CHEBI:43474"/>
        <dbReference type="ChEBI" id="CHEBI:57844"/>
        <dbReference type="ChEBI" id="CHEBI:59789"/>
        <dbReference type="EC" id="2.5.1.6"/>
    </reaction>
</comment>
<comment type="cofactor">
    <cofactor evidence="2">
        <name>Mg(2+)</name>
        <dbReference type="ChEBI" id="CHEBI:18420"/>
    </cofactor>
    <text evidence="2">Binds 2 magnesium ions per subunit. The magnesium ions interact primarily with the substrate.</text>
</comment>
<comment type="cofactor">
    <cofactor evidence="2">
        <name>K(+)</name>
        <dbReference type="ChEBI" id="CHEBI:29103"/>
    </cofactor>
    <text evidence="2">Binds 1 potassium ion per subunit. The potassium ion interacts primarily with the substrate.</text>
</comment>
<comment type="pathway">
    <text evidence="3">Amino-acid biosynthesis; S-adenosyl-L-methionine biosynthesis; S-adenosyl-L-methionine from L-methionine: step 1/1.</text>
</comment>
<comment type="miscellaneous">
    <text evidence="5">Protein expression is regulated by post-transcriptional regulation: under rich-diet conditions, mett-10 binds and methylates sams-5 mRNA, directly inhibiting splicing and protein production of S-adenosylmethionine synthase.</text>
</comment>
<comment type="similarity">
    <text evidence="4">Belongs to the AdoMet synthase family.</text>
</comment>
<keyword id="KW-0067">ATP-binding</keyword>
<keyword id="KW-0460">Magnesium</keyword>
<keyword id="KW-0479">Metal-binding</keyword>
<keyword id="KW-0547">Nucleotide-binding</keyword>
<keyword id="KW-0554">One-carbon metabolism</keyword>
<keyword id="KW-0630">Potassium</keyword>
<keyword id="KW-1185">Reference proteome</keyword>
<keyword id="KW-0808">Transferase</keyword>
<evidence type="ECO:0000250" key="1">
    <source>
        <dbReference type="UniProtKB" id="P0A817"/>
    </source>
</evidence>
<evidence type="ECO:0000250" key="2">
    <source>
        <dbReference type="UniProtKB" id="P13444"/>
    </source>
</evidence>
<evidence type="ECO:0000250" key="3">
    <source>
        <dbReference type="UniProtKB" id="Q00266"/>
    </source>
</evidence>
<evidence type="ECO:0000305" key="4"/>
<evidence type="ECO:0000305" key="5">
    <source>
    </source>
</evidence>
<gene>
    <name type="primary">sams-5</name>
    <name type="synonym">tag-32</name>
    <name type="ORF">T13A10.11</name>
</gene>
<dbReference type="EC" id="2.5.1.6" evidence="3"/>
<dbReference type="EMBL" id="FO081504">
    <property type="protein sequence ID" value="CCD72063.1"/>
    <property type="molecule type" value="Genomic_DNA"/>
</dbReference>
<dbReference type="PIR" id="T16856">
    <property type="entry name" value="T16856"/>
</dbReference>
<dbReference type="RefSeq" id="NP_741415.1">
    <property type="nucleotide sequence ID" value="NM_171354.6"/>
</dbReference>
<dbReference type="SMR" id="Q27522"/>
<dbReference type="BioGRID" id="42510">
    <property type="interactions" value="4"/>
</dbReference>
<dbReference type="FunCoup" id="Q27522">
    <property type="interactions" value="1938"/>
</dbReference>
<dbReference type="IntAct" id="Q27522">
    <property type="interactions" value="1"/>
</dbReference>
<dbReference type="STRING" id="6239.T13A10.11a.1"/>
<dbReference type="PaxDb" id="6239-T13A10.11a.1"/>
<dbReference type="PeptideAtlas" id="Q27522"/>
<dbReference type="EnsemblMetazoa" id="T13A10.11a.1">
    <property type="protein sequence ID" value="T13A10.11a.1"/>
    <property type="gene ID" value="WBGene00006416"/>
</dbReference>
<dbReference type="EnsemblMetazoa" id="T13A10.11a.2">
    <property type="protein sequence ID" value="T13A10.11a.2"/>
    <property type="gene ID" value="WBGene00006416"/>
</dbReference>
<dbReference type="GeneID" id="177389"/>
<dbReference type="KEGG" id="cel:CELE_T13A10.11"/>
<dbReference type="UCSC" id="T13A10.11a.1">
    <property type="organism name" value="c. elegans"/>
</dbReference>
<dbReference type="AGR" id="WB:WBGene00006416"/>
<dbReference type="CTD" id="177389"/>
<dbReference type="WormBase" id="T13A10.11a">
    <property type="protein sequence ID" value="CE30175"/>
    <property type="gene ID" value="WBGene00006416"/>
    <property type="gene designation" value="sams-5"/>
</dbReference>
<dbReference type="eggNOG" id="KOG1506">
    <property type="taxonomic scope" value="Eukaryota"/>
</dbReference>
<dbReference type="GeneTree" id="ENSGT00950000183185"/>
<dbReference type="HOGENOM" id="CLU_041802_1_1_1"/>
<dbReference type="InParanoid" id="Q27522"/>
<dbReference type="OMA" id="DGLCDHT"/>
<dbReference type="OrthoDB" id="5852090at2759"/>
<dbReference type="PhylomeDB" id="Q27522"/>
<dbReference type="UniPathway" id="UPA00315">
    <property type="reaction ID" value="UER00080"/>
</dbReference>
<dbReference type="PRO" id="PR:Q27522"/>
<dbReference type="Proteomes" id="UP000001940">
    <property type="component" value="Chromosome IV"/>
</dbReference>
<dbReference type="Bgee" id="WBGene00006416">
    <property type="expression patterns" value="Expressed in embryo and 3 other cell types or tissues"/>
</dbReference>
<dbReference type="GO" id="GO:0005829">
    <property type="term" value="C:cytosol"/>
    <property type="evidence" value="ECO:0000318"/>
    <property type="project" value="GO_Central"/>
</dbReference>
<dbReference type="GO" id="GO:0005524">
    <property type="term" value="F:ATP binding"/>
    <property type="evidence" value="ECO:0007669"/>
    <property type="project" value="UniProtKB-KW"/>
</dbReference>
<dbReference type="GO" id="GO:0046872">
    <property type="term" value="F:metal ion binding"/>
    <property type="evidence" value="ECO:0007669"/>
    <property type="project" value="UniProtKB-KW"/>
</dbReference>
<dbReference type="GO" id="GO:0004478">
    <property type="term" value="F:methionine adenosyltransferase activity"/>
    <property type="evidence" value="ECO:0000318"/>
    <property type="project" value="GO_Central"/>
</dbReference>
<dbReference type="GO" id="GO:0006730">
    <property type="term" value="P:one-carbon metabolic process"/>
    <property type="evidence" value="ECO:0007669"/>
    <property type="project" value="UniProtKB-KW"/>
</dbReference>
<dbReference type="GO" id="GO:0006556">
    <property type="term" value="P:S-adenosylmethionine biosynthetic process"/>
    <property type="evidence" value="ECO:0000318"/>
    <property type="project" value="GO_Central"/>
</dbReference>
<dbReference type="CDD" id="cd18079">
    <property type="entry name" value="S-AdoMet_synt"/>
    <property type="match status" value="1"/>
</dbReference>
<dbReference type="FunFam" id="3.30.300.10:FF:000001">
    <property type="entry name" value="S-adenosylmethionine synthase"/>
    <property type="match status" value="1"/>
</dbReference>
<dbReference type="FunFam" id="3.30.300.10:FF:000003">
    <property type="entry name" value="S-adenosylmethionine synthase"/>
    <property type="match status" value="1"/>
</dbReference>
<dbReference type="FunFam" id="3.30.300.10:FF:000004">
    <property type="entry name" value="S-adenosylmethionine synthase"/>
    <property type="match status" value="1"/>
</dbReference>
<dbReference type="Gene3D" id="3.30.300.10">
    <property type="match status" value="3"/>
</dbReference>
<dbReference type="HAMAP" id="MF_00086">
    <property type="entry name" value="S_AdoMet_synth1"/>
    <property type="match status" value="1"/>
</dbReference>
<dbReference type="InterPro" id="IPR022631">
    <property type="entry name" value="ADOMET_SYNTHASE_CS"/>
</dbReference>
<dbReference type="InterPro" id="IPR022630">
    <property type="entry name" value="S-AdoMet_synt_C"/>
</dbReference>
<dbReference type="InterPro" id="IPR022629">
    <property type="entry name" value="S-AdoMet_synt_central"/>
</dbReference>
<dbReference type="InterPro" id="IPR022628">
    <property type="entry name" value="S-AdoMet_synt_N"/>
</dbReference>
<dbReference type="InterPro" id="IPR002133">
    <property type="entry name" value="S-AdoMet_synthetase"/>
</dbReference>
<dbReference type="InterPro" id="IPR022636">
    <property type="entry name" value="S-AdoMet_synthetase_sfam"/>
</dbReference>
<dbReference type="NCBIfam" id="TIGR01034">
    <property type="entry name" value="metK"/>
    <property type="match status" value="1"/>
</dbReference>
<dbReference type="PANTHER" id="PTHR11964">
    <property type="entry name" value="S-ADENOSYLMETHIONINE SYNTHETASE"/>
    <property type="match status" value="1"/>
</dbReference>
<dbReference type="Pfam" id="PF02773">
    <property type="entry name" value="S-AdoMet_synt_C"/>
    <property type="match status" value="1"/>
</dbReference>
<dbReference type="Pfam" id="PF02772">
    <property type="entry name" value="S-AdoMet_synt_M"/>
    <property type="match status" value="1"/>
</dbReference>
<dbReference type="Pfam" id="PF00438">
    <property type="entry name" value="S-AdoMet_synt_N"/>
    <property type="match status" value="1"/>
</dbReference>
<dbReference type="PIRSF" id="PIRSF000497">
    <property type="entry name" value="MAT"/>
    <property type="match status" value="1"/>
</dbReference>
<dbReference type="SUPFAM" id="SSF55973">
    <property type="entry name" value="S-adenosylmethionine synthetase"/>
    <property type="match status" value="3"/>
</dbReference>
<dbReference type="PROSITE" id="PS00376">
    <property type="entry name" value="ADOMET_SYNTHASE_1"/>
    <property type="match status" value="1"/>
</dbReference>
<dbReference type="PROSITE" id="PS00377">
    <property type="entry name" value="ADOMET_SYNTHASE_2"/>
    <property type="match status" value="1"/>
</dbReference>
<protein>
    <recommendedName>
        <fullName>Probable S-adenosylmethionine synthase 5</fullName>
        <shortName>AdoMet synthase 5</shortName>
        <ecNumber evidence="3">2.5.1.6</ecNumber>
    </recommendedName>
    <alternativeName>
        <fullName>Methionine adenosyltransferase 5</fullName>
        <shortName>MAT 5</shortName>
    </alternativeName>
</protein>
<reference key="1">
    <citation type="journal article" date="1998" name="Science">
        <title>Genome sequence of the nematode C. elegans: a platform for investigating biology.</title>
        <authorList>
            <consortium name="The C. elegans sequencing consortium"/>
        </authorList>
    </citation>
    <scope>NUCLEOTIDE SEQUENCE [LARGE SCALE GENOMIC DNA]</scope>
    <scope>ALTERNATIVE SPLICING</scope>
    <source>
        <strain>Bristol N2</strain>
    </source>
</reference>
<reference key="2">
    <citation type="journal article" date="2021" name="Cell">
        <title>Splice site m6A methylation prevents binding of U2AF35 to inhibit RNA splicing.</title>
        <authorList>
            <person name="Mendel M."/>
            <person name="Delaney K."/>
            <person name="Pandey R.R."/>
            <person name="Chen K.M."/>
            <person name="Wenda J.M."/>
            <person name="Vaagboe C.B."/>
            <person name="Steiner F.A."/>
            <person name="Homolka D."/>
            <person name="Pillai R.S."/>
        </authorList>
    </citation>
    <scope>POST-TRANSCRIPTIONAL REGULATION</scope>
</reference>
<proteinExistence type="inferred from homology"/>
<organism>
    <name type="scientific">Caenorhabditis elegans</name>
    <dbReference type="NCBI Taxonomy" id="6239"/>
    <lineage>
        <taxon>Eukaryota</taxon>
        <taxon>Metazoa</taxon>
        <taxon>Ecdysozoa</taxon>
        <taxon>Nematoda</taxon>
        <taxon>Chromadorea</taxon>
        <taxon>Rhabditida</taxon>
        <taxon>Rhabditina</taxon>
        <taxon>Rhabditomorpha</taxon>
        <taxon>Rhabditoidea</taxon>
        <taxon>Rhabditidae</taxon>
        <taxon>Peloderinae</taxon>
        <taxon>Caenorhabditis</taxon>
    </lineage>
</organism>
<name>METK5_CAEEL</name>
<sequence>MSKNKFLFTSESVSEGHPDKMCDQISDAVLDAHLAQDPHAKVACETVTKTGMIMLCGEITSKAVVDYQVLVRNVIKKIGYDDSSKGFDYKTCNVLVALEQQSPEIAAGVHVDKDIADVGAGDQGIMFGYATDETEEAMPLTLLLSHKLNYKLHELRRSGELEWVRPDSKTQVTIEYSSEGGACVPLRVHTVVISTQHSPDISLEDLRKELIEKVIKVVIPGNLIDNDTVYHLNPCGSFVVGGPMGDAGLTGRKIIVDTYGGWGAHGGGAFSGKDPTKVDRSAAYAARWVAKSLVKAGLCRRCLVQVSYAIGVAKPLSVMVFSFGTSALNEAELLKIVNDNFDLRPGMIIKNLDLKRAIYEPTAENGHFGHNDFPWEQARKLKIDKDLRAKSKGPALVDAIGIAH</sequence>
<feature type="chain" id="PRO_0000174445" description="Probable S-adenosylmethionine synthase 5">
    <location>
        <begin position="1"/>
        <end position="404"/>
    </location>
</feature>
<feature type="binding site" evidence="2">
    <location>
        <position position="11"/>
    </location>
    <ligand>
        <name>Mg(2+)</name>
        <dbReference type="ChEBI" id="CHEBI:18420"/>
    </ligand>
</feature>
<feature type="binding site" description="in other chain" evidence="3">
    <location>
        <position position="17"/>
    </location>
    <ligand>
        <name>ATP</name>
        <dbReference type="ChEBI" id="CHEBI:30616"/>
        <note>ligand shared between two neighboring subunits</note>
    </ligand>
</feature>
<feature type="binding site" evidence="1">
    <location>
        <position position="45"/>
    </location>
    <ligand>
        <name>K(+)</name>
        <dbReference type="ChEBI" id="CHEBI:29103"/>
    </ligand>
</feature>
<feature type="binding site" description="in other chain" evidence="1">
    <location>
        <position position="58"/>
    </location>
    <ligand>
        <name>L-methionine</name>
        <dbReference type="ChEBI" id="CHEBI:57844"/>
        <note>ligand shared between two neighboring subunits</note>
    </ligand>
</feature>
<feature type="binding site" description="in other chain" evidence="1">
    <location>
        <position position="101"/>
    </location>
    <ligand>
        <name>L-methionine</name>
        <dbReference type="ChEBI" id="CHEBI:57844"/>
        <note>ligand shared between two neighboring subunits</note>
    </ligand>
</feature>
<feature type="binding site" description="in other chain" evidence="3">
    <location>
        <begin position="167"/>
        <end position="169"/>
    </location>
    <ligand>
        <name>ATP</name>
        <dbReference type="ChEBI" id="CHEBI:30616"/>
        <note>ligand shared between two neighboring subunits</note>
    </ligand>
</feature>
<feature type="binding site" description="in other chain" evidence="3">
    <location>
        <begin position="235"/>
        <end position="238"/>
    </location>
    <ligand>
        <name>ATP</name>
        <dbReference type="ChEBI" id="CHEBI:30616"/>
        <note>ligand shared between two neighboring subunits</note>
    </ligand>
</feature>
<feature type="binding site" description="in other chain" evidence="3">
    <location>
        <position position="246"/>
    </location>
    <ligand>
        <name>ATP</name>
        <dbReference type="ChEBI" id="CHEBI:30616"/>
        <note>ligand shared between two neighboring subunits</note>
    </ligand>
</feature>
<feature type="binding site" evidence="1">
    <location>
        <position position="246"/>
    </location>
    <ligand>
        <name>L-methionine</name>
        <dbReference type="ChEBI" id="CHEBI:57844"/>
        <note>ligand shared between two neighboring subunits</note>
    </ligand>
</feature>
<feature type="binding site" description="in other chain" evidence="1">
    <location>
        <begin position="252"/>
        <end position="253"/>
    </location>
    <ligand>
        <name>ATP</name>
        <dbReference type="ChEBI" id="CHEBI:30616"/>
        <note>ligand shared between two neighboring subunits</note>
    </ligand>
</feature>
<feature type="binding site" evidence="1">
    <location>
        <position position="269"/>
    </location>
    <ligand>
        <name>ATP</name>
        <dbReference type="ChEBI" id="CHEBI:30616"/>
        <note>ligand shared between two neighboring subunits</note>
    </ligand>
</feature>
<feature type="binding site" evidence="1">
    <location>
        <position position="273"/>
    </location>
    <ligand>
        <name>ATP</name>
        <dbReference type="ChEBI" id="CHEBI:30616"/>
        <note>ligand shared between two neighboring subunits</note>
    </ligand>
</feature>
<feature type="binding site" evidence="2">
    <location>
        <position position="277"/>
    </location>
    <ligand>
        <name>ATP</name>
        <dbReference type="ChEBI" id="CHEBI:30616"/>
        <note>ligand shared between two neighboring subunits</note>
    </ligand>
</feature>
<feature type="binding site" description="in other chain" evidence="1">
    <location>
        <position position="277"/>
    </location>
    <ligand>
        <name>L-methionine</name>
        <dbReference type="ChEBI" id="CHEBI:57844"/>
        <note>ligand shared between two neighboring subunits</note>
    </ligand>
</feature>